<feature type="chain" id="PRO_0000106952" description="Uncharacterized protein MJ0602">
    <location>
        <begin position="1"/>
        <end position="261"/>
    </location>
</feature>
<gene>
    <name type="ordered locus">MJ0602</name>
</gene>
<accession>Q58019</accession>
<reference key="1">
    <citation type="journal article" date="1996" name="Science">
        <title>Complete genome sequence of the methanogenic archaeon, Methanococcus jannaschii.</title>
        <authorList>
            <person name="Bult C.J."/>
            <person name="White O."/>
            <person name="Olsen G.J."/>
            <person name="Zhou L."/>
            <person name="Fleischmann R.D."/>
            <person name="Sutton G.G."/>
            <person name="Blake J.A."/>
            <person name="FitzGerald L.M."/>
            <person name="Clayton R.A."/>
            <person name="Gocayne J.D."/>
            <person name="Kerlavage A.R."/>
            <person name="Dougherty B.A."/>
            <person name="Tomb J.-F."/>
            <person name="Adams M.D."/>
            <person name="Reich C.I."/>
            <person name="Overbeek R."/>
            <person name="Kirkness E.F."/>
            <person name="Weinstock K.G."/>
            <person name="Merrick J.M."/>
            <person name="Glodek A."/>
            <person name="Scott J.L."/>
            <person name="Geoghagen N.S.M."/>
            <person name="Weidman J.F."/>
            <person name="Fuhrmann J.L."/>
            <person name="Nguyen D."/>
            <person name="Utterback T.R."/>
            <person name="Kelley J.M."/>
            <person name="Peterson J.D."/>
            <person name="Sadow P.W."/>
            <person name="Hanna M.C."/>
            <person name="Cotton M.D."/>
            <person name="Roberts K.M."/>
            <person name="Hurst M.A."/>
            <person name="Kaine B.P."/>
            <person name="Borodovsky M."/>
            <person name="Klenk H.-P."/>
            <person name="Fraser C.M."/>
            <person name="Smith H.O."/>
            <person name="Woese C.R."/>
            <person name="Venter J.C."/>
        </authorList>
    </citation>
    <scope>NUCLEOTIDE SEQUENCE [LARGE SCALE GENOMIC DNA]</scope>
    <source>
        <strain>ATCC 43067 / DSM 2661 / JAL-1 / JCM 10045 / NBRC 100440</strain>
    </source>
</reference>
<name>Y602_METJA</name>
<organism>
    <name type="scientific">Methanocaldococcus jannaschii (strain ATCC 43067 / DSM 2661 / JAL-1 / JCM 10045 / NBRC 100440)</name>
    <name type="common">Methanococcus jannaschii</name>
    <dbReference type="NCBI Taxonomy" id="243232"/>
    <lineage>
        <taxon>Archaea</taxon>
        <taxon>Methanobacteriati</taxon>
        <taxon>Methanobacteriota</taxon>
        <taxon>Methanomada group</taxon>
        <taxon>Methanococci</taxon>
        <taxon>Methanococcales</taxon>
        <taxon>Methanocaldococcaceae</taxon>
        <taxon>Methanocaldococcus</taxon>
    </lineage>
</organism>
<keyword id="KW-1185">Reference proteome</keyword>
<protein>
    <recommendedName>
        <fullName>Uncharacterized protein MJ0602</fullName>
    </recommendedName>
</protein>
<proteinExistence type="predicted"/>
<sequence length="261" mass="30835">MLLEKSKIEIIEQFIHILEILEMYAKEGSDEKAIIRLMLDYLEKGYVLDDDILPIASKISEIAKKVGSFDMKREISLLLFGERKRLTKSQKNKIKKIIEILEYLKSYIEKKPYKSYEDKLILNLIGLKILRLDNGIVLDYNSEVRSLTNMALRVGSYELKNEIELLLTGRRRRKLTEEFIQKRLSIIKILEMVKDFIDKKEFKSSFDYEALFLINLKIYRIEEGILKNFDEEIESILNIARKVGNHKLREQIVLLKESIKN</sequence>
<dbReference type="EMBL" id="L77117">
    <property type="protein sequence ID" value="AAB98598.1"/>
    <property type="molecule type" value="Genomic_DNA"/>
</dbReference>
<dbReference type="PIR" id="B64375">
    <property type="entry name" value="B64375"/>
</dbReference>
<dbReference type="RefSeq" id="WP_010870106.1">
    <property type="nucleotide sequence ID" value="NC_000909.1"/>
</dbReference>
<dbReference type="SMR" id="Q58019"/>
<dbReference type="STRING" id="243232.MJ_0602"/>
<dbReference type="PaxDb" id="243232-MJ_0602"/>
<dbReference type="EnsemblBacteria" id="AAB98598">
    <property type="protein sequence ID" value="AAB98598"/>
    <property type="gene ID" value="MJ_0602"/>
</dbReference>
<dbReference type="GeneID" id="1451467"/>
<dbReference type="KEGG" id="mja:MJ_0602"/>
<dbReference type="eggNOG" id="arCOG08295">
    <property type="taxonomic scope" value="Archaea"/>
</dbReference>
<dbReference type="HOGENOM" id="CLU_1064006_0_0_2"/>
<dbReference type="InParanoid" id="Q58019"/>
<dbReference type="OrthoDB" id="65448at2157"/>
<dbReference type="Proteomes" id="UP000000805">
    <property type="component" value="Chromosome"/>
</dbReference>